<name>RL10_RHIEC</name>
<gene>
    <name evidence="1" type="primary">rplJ</name>
    <name type="ordered locus">RHE_CH01665</name>
</gene>
<feature type="chain" id="PRO_1000005570" description="Large ribosomal subunit protein uL10">
    <location>
        <begin position="1"/>
        <end position="172"/>
    </location>
</feature>
<evidence type="ECO:0000255" key="1">
    <source>
        <dbReference type="HAMAP-Rule" id="MF_00362"/>
    </source>
</evidence>
<evidence type="ECO:0000305" key="2"/>
<keyword id="KW-1185">Reference proteome</keyword>
<keyword id="KW-0687">Ribonucleoprotein</keyword>
<keyword id="KW-0689">Ribosomal protein</keyword>
<keyword id="KW-0694">RNA-binding</keyword>
<keyword id="KW-0699">rRNA-binding</keyword>
<sequence>MERAEKREFVTELNEVFKASGSVVVAHYAGATVAQMNDFRSKMRAAGGTVKVAKNRLAKIALQGTEAEGISNLFKGQTLIAYSNDPITAPKVVMDFAKTNDKIVVLGGAMGTTTLNAEGVKSLATLPSLDELRAKLLGMIQTPATRIAGVVAAPASQLARVFSAYAKKDEAA</sequence>
<reference key="1">
    <citation type="journal article" date="2006" name="Proc. Natl. Acad. Sci. U.S.A.">
        <title>The partitioned Rhizobium etli genome: genetic and metabolic redundancy in seven interacting replicons.</title>
        <authorList>
            <person name="Gonzalez V."/>
            <person name="Santamaria R.I."/>
            <person name="Bustos P."/>
            <person name="Hernandez-Gonzalez I."/>
            <person name="Medrano-Soto A."/>
            <person name="Moreno-Hagelsieb G."/>
            <person name="Janga S.C."/>
            <person name="Ramirez M.A."/>
            <person name="Jimenez-Jacinto V."/>
            <person name="Collado-Vides J."/>
            <person name="Davila G."/>
        </authorList>
    </citation>
    <scope>NUCLEOTIDE SEQUENCE [LARGE SCALE GENOMIC DNA]</scope>
    <source>
        <strain>ATCC 51251 / DSM 11541 / JCM 21823 / NBRC 15573 / CFN 42</strain>
    </source>
</reference>
<protein>
    <recommendedName>
        <fullName evidence="1">Large ribosomal subunit protein uL10</fullName>
    </recommendedName>
    <alternativeName>
        <fullName evidence="2">50S ribosomal protein L10</fullName>
    </alternativeName>
</protein>
<dbReference type="EMBL" id="CP000133">
    <property type="protein sequence ID" value="ABC90460.1"/>
    <property type="molecule type" value="Genomic_DNA"/>
</dbReference>
<dbReference type="RefSeq" id="WP_008521410.1">
    <property type="nucleotide sequence ID" value="NC_007761.1"/>
</dbReference>
<dbReference type="SMR" id="Q2K9M6"/>
<dbReference type="GeneID" id="66145846"/>
<dbReference type="KEGG" id="ret:RHE_CH01665"/>
<dbReference type="eggNOG" id="COG0244">
    <property type="taxonomic scope" value="Bacteria"/>
</dbReference>
<dbReference type="HOGENOM" id="CLU_092227_0_0_5"/>
<dbReference type="OrthoDB" id="9791972at2"/>
<dbReference type="Proteomes" id="UP000001936">
    <property type="component" value="Chromosome"/>
</dbReference>
<dbReference type="GO" id="GO:1990904">
    <property type="term" value="C:ribonucleoprotein complex"/>
    <property type="evidence" value="ECO:0007669"/>
    <property type="project" value="UniProtKB-KW"/>
</dbReference>
<dbReference type="GO" id="GO:0005840">
    <property type="term" value="C:ribosome"/>
    <property type="evidence" value="ECO:0007669"/>
    <property type="project" value="UniProtKB-KW"/>
</dbReference>
<dbReference type="GO" id="GO:0070180">
    <property type="term" value="F:large ribosomal subunit rRNA binding"/>
    <property type="evidence" value="ECO:0007669"/>
    <property type="project" value="UniProtKB-UniRule"/>
</dbReference>
<dbReference type="GO" id="GO:0006412">
    <property type="term" value="P:translation"/>
    <property type="evidence" value="ECO:0007669"/>
    <property type="project" value="UniProtKB-UniRule"/>
</dbReference>
<dbReference type="CDD" id="cd05797">
    <property type="entry name" value="Ribosomal_L10"/>
    <property type="match status" value="1"/>
</dbReference>
<dbReference type="Gene3D" id="3.30.70.1730">
    <property type="match status" value="1"/>
</dbReference>
<dbReference type="Gene3D" id="6.10.250.290">
    <property type="match status" value="1"/>
</dbReference>
<dbReference type="HAMAP" id="MF_00362">
    <property type="entry name" value="Ribosomal_uL10"/>
    <property type="match status" value="1"/>
</dbReference>
<dbReference type="InterPro" id="IPR001790">
    <property type="entry name" value="Ribosomal_uL10"/>
</dbReference>
<dbReference type="InterPro" id="IPR043141">
    <property type="entry name" value="Ribosomal_uL10-like_sf"/>
</dbReference>
<dbReference type="InterPro" id="IPR022973">
    <property type="entry name" value="Ribosomal_uL10_bac"/>
</dbReference>
<dbReference type="InterPro" id="IPR047865">
    <property type="entry name" value="Ribosomal_uL10_bac_type"/>
</dbReference>
<dbReference type="NCBIfam" id="NF000955">
    <property type="entry name" value="PRK00099.1-1"/>
    <property type="match status" value="1"/>
</dbReference>
<dbReference type="PANTHER" id="PTHR11560">
    <property type="entry name" value="39S RIBOSOMAL PROTEIN L10, MITOCHONDRIAL"/>
    <property type="match status" value="1"/>
</dbReference>
<dbReference type="Pfam" id="PF00466">
    <property type="entry name" value="Ribosomal_L10"/>
    <property type="match status" value="1"/>
</dbReference>
<dbReference type="SUPFAM" id="SSF160369">
    <property type="entry name" value="Ribosomal protein L10-like"/>
    <property type="match status" value="1"/>
</dbReference>
<accession>Q2K9M6</accession>
<proteinExistence type="inferred from homology"/>
<comment type="function">
    <text evidence="1">Forms part of the ribosomal stalk, playing a central role in the interaction of the ribosome with GTP-bound translation factors.</text>
</comment>
<comment type="subunit">
    <text evidence="1">Part of the ribosomal stalk of the 50S ribosomal subunit. The N-terminus interacts with L11 and the large rRNA to form the base of the stalk. The C-terminus forms an elongated spine to which L12 dimers bind in a sequential fashion forming a multimeric L10(L12)X complex.</text>
</comment>
<comment type="similarity">
    <text evidence="1">Belongs to the universal ribosomal protein uL10 family.</text>
</comment>
<organism>
    <name type="scientific">Rhizobium etli (strain ATCC 51251 / DSM 11541 / JCM 21823 / NBRC 15573 / CFN 42)</name>
    <dbReference type="NCBI Taxonomy" id="347834"/>
    <lineage>
        <taxon>Bacteria</taxon>
        <taxon>Pseudomonadati</taxon>
        <taxon>Pseudomonadota</taxon>
        <taxon>Alphaproteobacteria</taxon>
        <taxon>Hyphomicrobiales</taxon>
        <taxon>Rhizobiaceae</taxon>
        <taxon>Rhizobium/Agrobacterium group</taxon>
        <taxon>Rhizobium</taxon>
    </lineage>
</organism>